<dbReference type="EC" id="3.1.1.4"/>
<dbReference type="SMR" id="P86806"/>
<dbReference type="GO" id="GO:0005576">
    <property type="term" value="C:extracellular region"/>
    <property type="evidence" value="ECO:0000314"/>
    <property type="project" value="UniProtKB"/>
</dbReference>
<dbReference type="GO" id="GO:0005509">
    <property type="term" value="F:calcium ion binding"/>
    <property type="evidence" value="ECO:0007669"/>
    <property type="project" value="InterPro"/>
</dbReference>
<dbReference type="GO" id="GO:0047498">
    <property type="term" value="F:calcium-dependent phospholipase A2 activity"/>
    <property type="evidence" value="ECO:0007669"/>
    <property type="project" value="TreeGrafter"/>
</dbReference>
<dbReference type="GO" id="GO:0004623">
    <property type="term" value="F:phospholipase A2 activity"/>
    <property type="evidence" value="ECO:0000314"/>
    <property type="project" value="UniProtKB"/>
</dbReference>
<dbReference type="GO" id="GO:0005543">
    <property type="term" value="F:phospholipid binding"/>
    <property type="evidence" value="ECO:0007669"/>
    <property type="project" value="TreeGrafter"/>
</dbReference>
<dbReference type="GO" id="GO:0090729">
    <property type="term" value="F:toxin activity"/>
    <property type="evidence" value="ECO:0000314"/>
    <property type="project" value="UniProtKB"/>
</dbReference>
<dbReference type="GO" id="GO:0050482">
    <property type="term" value="P:arachidonate secretion"/>
    <property type="evidence" value="ECO:0007669"/>
    <property type="project" value="InterPro"/>
</dbReference>
<dbReference type="GO" id="GO:0042130">
    <property type="term" value="P:negative regulation of T cell proliferation"/>
    <property type="evidence" value="ECO:0007669"/>
    <property type="project" value="TreeGrafter"/>
</dbReference>
<dbReference type="GO" id="GO:0009395">
    <property type="term" value="P:phospholipid catabolic process"/>
    <property type="evidence" value="ECO:0000314"/>
    <property type="project" value="UniProtKB"/>
</dbReference>
<dbReference type="GO" id="GO:0035899">
    <property type="term" value="P:suppression of blood coagulation in another organism"/>
    <property type="evidence" value="ECO:0000314"/>
    <property type="project" value="UniProtKB"/>
</dbReference>
<dbReference type="GO" id="GO:0044522">
    <property type="term" value="P:venom-mediated myocyte killing in another organism"/>
    <property type="evidence" value="ECO:0000314"/>
    <property type="project" value="UniProtKB"/>
</dbReference>
<dbReference type="GO" id="GO:0044470">
    <property type="term" value="P:venom-mediated suppression of blood coagulation"/>
    <property type="evidence" value="ECO:0000314"/>
    <property type="project" value="UniProtKB"/>
</dbReference>
<dbReference type="CDD" id="cd00125">
    <property type="entry name" value="PLA2c"/>
    <property type="match status" value="1"/>
</dbReference>
<dbReference type="FunFam" id="1.20.90.10:FF:000001">
    <property type="entry name" value="Basic phospholipase A2 homolog"/>
    <property type="match status" value="1"/>
</dbReference>
<dbReference type="Gene3D" id="1.20.90.10">
    <property type="entry name" value="Phospholipase A2 domain"/>
    <property type="match status" value="1"/>
</dbReference>
<dbReference type="InterPro" id="IPR001211">
    <property type="entry name" value="PLipase_A2"/>
</dbReference>
<dbReference type="InterPro" id="IPR033112">
    <property type="entry name" value="PLipase_A2_Asp_AS"/>
</dbReference>
<dbReference type="InterPro" id="IPR016090">
    <property type="entry name" value="PLipase_A2_dom"/>
</dbReference>
<dbReference type="InterPro" id="IPR036444">
    <property type="entry name" value="PLipase_A2_dom_sf"/>
</dbReference>
<dbReference type="InterPro" id="IPR033113">
    <property type="entry name" value="PLipase_A2_His_AS"/>
</dbReference>
<dbReference type="PANTHER" id="PTHR11716">
    <property type="entry name" value="PHOSPHOLIPASE A2 FAMILY MEMBER"/>
    <property type="match status" value="1"/>
</dbReference>
<dbReference type="PANTHER" id="PTHR11716:SF9">
    <property type="entry name" value="PHOSPHOLIPASE A2, MEMBRANE ASSOCIATED"/>
    <property type="match status" value="1"/>
</dbReference>
<dbReference type="Pfam" id="PF00068">
    <property type="entry name" value="Phospholip_A2_1"/>
    <property type="match status" value="1"/>
</dbReference>
<dbReference type="PRINTS" id="PR00389">
    <property type="entry name" value="PHPHLIPASEA2"/>
</dbReference>
<dbReference type="SMART" id="SM00085">
    <property type="entry name" value="PA2c"/>
    <property type="match status" value="1"/>
</dbReference>
<dbReference type="SUPFAM" id="SSF48619">
    <property type="entry name" value="Phospholipase A2, PLA2"/>
    <property type="match status" value="1"/>
</dbReference>
<dbReference type="PROSITE" id="PS00119">
    <property type="entry name" value="PA2_ASP"/>
    <property type="match status" value="1"/>
</dbReference>
<dbReference type="PROSITE" id="PS00118">
    <property type="entry name" value="PA2_HIS"/>
    <property type="match status" value="1"/>
</dbReference>
<protein>
    <recommendedName>
        <fullName>Basic phospholipase A2 10</fullName>
        <shortName>svPLA2</shortName>
        <ecNumber>3.1.1.4</ecNumber>
    </recommendedName>
    <alternativeName>
        <fullName evidence="6">Cdc-10</fullName>
    </alternativeName>
    <alternativeName>
        <fullName evidence="2">Phosphatidylcholine 2-acylhydrolase</fullName>
    </alternativeName>
</protein>
<sequence>SLLQFNKMIKFETRKSGVPFYAAYGCYCGWGGRRPKDPTDRCCFVHDCCYGKLTKCNTKWDIYSYSLKSGYITCGKGTWCKEQICECDRVAAECLRRSLNTYKNEYMFYPDSRCRGPPEYTC</sequence>
<reference evidence="7" key="1">
    <citation type="journal article" date="2010" name="Comp. Biochem. Physiol.">
        <title>Biological and biochemical characterization of two new PLA2 isoforms Cdc-9 and Cdc-10 from Crotalus durissus cumanensis snake venom.</title>
        <authorList>
            <person name="Romero-Vargas F.F."/>
            <person name="Ponce-Soto L.A."/>
            <person name="Martins-de-Souza D."/>
            <person name="Marangoni S."/>
        </authorList>
    </citation>
    <scope>PROTEIN SEQUENCE</scope>
    <scope>FUNCTION</scope>
    <scope>CATALYTIC ACTIVITY</scope>
    <scope>SUBCELLULAR LOCATION</scope>
    <scope>TISSUE SPECIFICITY</scope>
    <scope>MASS SPECTROMETRY</scope>
    <source>
        <tissue evidence="5">Venom</tissue>
    </source>
</reference>
<accession>P86806</accession>
<keyword id="KW-1203">Blood coagulation cascade inhibiting toxin</keyword>
<keyword id="KW-0106">Calcium</keyword>
<keyword id="KW-0903">Direct protein sequencing</keyword>
<keyword id="KW-1015">Disulfide bond</keyword>
<keyword id="KW-1199">Hemostasis impairing toxin</keyword>
<keyword id="KW-0378">Hydrolase</keyword>
<keyword id="KW-0442">Lipid degradation</keyword>
<keyword id="KW-0443">Lipid metabolism</keyword>
<keyword id="KW-0479">Metal-binding</keyword>
<keyword id="KW-0959">Myotoxin</keyword>
<keyword id="KW-0964">Secreted</keyword>
<keyword id="KW-0800">Toxin</keyword>
<name>PA2BA_CRODM</name>
<feature type="chain" id="PRO_0000401144" description="Basic phospholipase A2 10">
    <location>
        <begin position="1"/>
        <end position="122"/>
    </location>
</feature>
<feature type="active site" evidence="1">
    <location>
        <position position="46"/>
    </location>
</feature>
<feature type="active site" evidence="1">
    <location>
        <position position="88"/>
    </location>
</feature>
<feature type="binding site" evidence="1">
    <location>
        <position position="27"/>
    </location>
    <ligand>
        <name>Ca(2+)</name>
        <dbReference type="ChEBI" id="CHEBI:29108"/>
    </ligand>
</feature>
<feature type="binding site" evidence="1">
    <location>
        <position position="29"/>
    </location>
    <ligand>
        <name>Ca(2+)</name>
        <dbReference type="ChEBI" id="CHEBI:29108"/>
    </ligand>
</feature>
<feature type="binding site" evidence="1">
    <location>
        <position position="31"/>
    </location>
    <ligand>
        <name>Ca(2+)</name>
        <dbReference type="ChEBI" id="CHEBI:29108"/>
    </ligand>
</feature>
<feature type="binding site" evidence="1">
    <location>
        <position position="47"/>
    </location>
    <ligand>
        <name>Ca(2+)</name>
        <dbReference type="ChEBI" id="CHEBI:29108"/>
    </ligand>
</feature>
<feature type="disulfide bond" evidence="1">
    <location>
        <begin position="26"/>
        <end position="114"/>
    </location>
</feature>
<feature type="disulfide bond" evidence="1">
    <location>
        <begin position="28"/>
        <end position="43"/>
    </location>
</feature>
<feature type="disulfide bond" evidence="1">
    <location>
        <begin position="42"/>
        <end position="94"/>
    </location>
</feature>
<feature type="disulfide bond" evidence="1">
    <location>
        <begin position="48"/>
        <end position="122"/>
    </location>
</feature>
<feature type="disulfide bond" evidence="1">
    <location>
        <begin position="49"/>
        <end position="87"/>
    </location>
</feature>
<feature type="disulfide bond" evidence="1">
    <location>
        <begin position="56"/>
        <end position="80"/>
    </location>
</feature>
<feature type="disulfide bond" evidence="1">
    <location>
        <begin position="74"/>
        <end position="85"/>
    </location>
</feature>
<organism>
    <name type="scientific">Crotalus durissus cumanensis</name>
    <name type="common">South American rattlesnake</name>
    <dbReference type="NCBI Taxonomy" id="184542"/>
    <lineage>
        <taxon>Eukaryota</taxon>
        <taxon>Metazoa</taxon>
        <taxon>Chordata</taxon>
        <taxon>Craniata</taxon>
        <taxon>Vertebrata</taxon>
        <taxon>Euteleostomi</taxon>
        <taxon>Lepidosauria</taxon>
        <taxon>Squamata</taxon>
        <taxon>Bifurcata</taxon>
        <taxon>Unidentata</taxon>
        <taxon>Episquamata</taxon>
        <taxon>Toxicofera</taxon>
        <taxon>Serpentes</taxon>
        <taxon>Colubroidea</taxon>
        <taxon>Viperidae</taxon>
        <taxon>Crotalinae</taxon>
        <taxon>Crotalus</taxon>
    </lineage>
</organism>
<proteinExistence type="evidence at protein level"/>
<comment type="function">
    <text evidence="5">Snake venom phospholipase A2 (PLA2) that has a strong dose-dependent anticoagulant effect. In vivo, intramuscular and intervenal injection causes muscle necrosis. Induces moderate edema in the mouse foot pad. PLA2 catalyzes the calcium-dependent hydrolysis of the 2-acyl groups in 3-sn-phosphoglycerides.</text>
</comment>
<comment type="catalytic activity">
    <reaction evidence="3 4 5">
        <text>a 1,2-diacyl-sn-glycero-3-phosphocholine + H2O = a 1-acyl-sn-glycero-3-phosphocholine + a fatty acid + H(+)</text>
        <dbReference type="Rhea" id="RHEA:15801"/>
        <dbReference type="ChEBI" id="CHEBI:15377"/>
        <dbReference type="ChEBI" id="CHEBI:15378"/>
        <dbReference type="ChEBI" id="CHEBI:28868"/>
        <dbReference type="ChEBI" id="CHEBI:57643"/>
        <dbReference type="ChEBI" id="CHEBI:58168"/>
        <dbReference type="EC" id="3.1.1.4"/>
    </reaction>
</comment>
<comment type="cofactor">
    <cofactor evidence="1">
        <name>Ca(2+)</name>
        <dbReference type="ChEBI" id="CHEBI:29108"/>
    </cofactor>
    <text evidence="1">Binds 1 Ca(2+) ion.</text>
</comment>
<comment type="activity regulation">
    <text evidence="5">Inhibited by chemical modifications mediated by p-BPB, anhydrous acetic acid and NBSF.</text>
</comment>
<comment type="subcellular location">
    <subcellularLocation>
        <location evidence="5">Secreted</location>
    </subcellularLocation>
</comment>
<comment type="tissue specificity">
    <text evidence="5">Expressed by the venom gland.</text>
</comment>
<comment type="mass spectrometry"/>
<comment type="similarity">
    <text evidence="7">Belongs to the phospholipase A2 family. Group II subfamily. D49 sub-subfamily.</text>
</comment>
<evidence type="ECO:0000250" key="1">
    <source>
        <dbReference type="UniProtKB" id="P59071"/>
    </source>
</evidence>
<evidence type="ECO:0000250" key="2">
    <source>
        <dbReference type="UniProtKB" id="P84397"/>
    </source>
</evidence>
<evidence type="ECO:0000255" key="3">
    <source>
        <dbReference type="PROSITE-ProRule" id="PRU10035"/>
    </source>
</evidence>
<evidence type="ECO:0000255" key="4">
    <source>
        <dbReference type="PROSITE-ProRule" id="PRU10036"/>
    </source>
</evidence>
<evidence type="ECO:0000269" key="5">
    <source>
    </source>
</evidence>
<evidence type="ECO:0000303" key="6">
    <source>
    </source>
</evidence>
<evidence type="ECO:0000305" key="7"/>